<comment type="function">
    <text evidence="1">Facilitates the functional incorporation of the urease nickel metallocenter. This process requires GTP hydrolysis, probably effectuated by UreG.</text>
</comment>
<comment type="subunit">
    <text evidence="1">Homodimer. UreD, UreF and UreG form a complex that acts as a GTP-hydrolysis-dependent molecular chaperone, activating the urease apoprotein by helping to assemble the nickel containing metallocenter of UreC. The UreE protein probably delivers the nickel.</text>
</comment>
<comment type="subcellular location">
    <subcellularLocation>
        <location evidence="1">Cytoplasm</location>
    </subcellularLocation>
</comment>
<comment type="similarity">
    <text evidence="1">Belongs to the SIMIBI class G3E GTPase family. UreG subfamily.</text>
</comment>
<name>UREG_MYCSS</name>
<reference key="1">
    <citation type="submission" date="2006-06" db="EMBL/GenBank/DDBJ databases">
        <title>Complete sequence of chromosome of Mycobacterium sp. MCS.</title>
        <authorList>
            <consortium name="US DOE Joint Genome Institute"/>
            <person name="Copeland A."/>
            <person name="Lucas S."/>
            <person name="Lapidus A."/>
            <person name="Barry K."/>
            <person name="Detter J.C."/>
            <person name="Glavina del Rio T."/>
            <person name="Hammon N."/>
            <person name="Israni S."/>
            <person name="Dalin E."/>
            <person name="Tice H."/>
            <person name="Pitluck S."/>
            <person name="Martinez M."/>
            <person name="Schmutz J."/>
            <person name="Larimer F."/>
            <person name="Land M."/>
            <person name="Hauser L."/>
            <person name="Kyrpides N."/>
            <person name="Kim E."/>
            <person name="Miller C.D."/>
            <person name="Hughes J.E."/>
            <person name="Anderson A.J."/>
            <person name="Sims R.C."/>
            <person name="Richardson P."/>
        </authorList>
    </citation>
    <scope>NUCLEOTIDE SEQUENCE [LARGE SCALE GENOMIC DNA]</scope>
    <source>
        <strain>MCS</strain>
    </source>
</reference>
<dbReference type="EMBL" id="CP000384">
    <property type="protein sequence ID" value="ABG08910.1"/>
    <property type="molecule type" value="Genomic_DNA"/>
</dbReference>
<dbReference type="SMR" id="Q1B874"/>
<dbReference type="KEGG" id="mmc:Mmcs_2803"/>
<dbReference type="HOGENOM" id="CLU_072144_1_0_11"/>
<dbReference type="BioCyc" id="MSP164756:G1G6O-2857-MONOMER"/>
<dbReference type="GO" id="GO:0005737">
    <property type="term" value="C:cytoplasm"/>
    <property type="evidence" value="ECO:0007669"/>
    <property type="project" value="UniProtKB-SubCell"/>
</dbReference>
<dbReference type="GO" id="GO:0005525">
    <property type="term" value="F:GTP binding"/>
    <property type="evidence" value="ECO:0007669"/>
    <property type="project" value="UniProtKB-KW"/>
</dbReference>
<dbReference type="GO" id="GO:0003924">
    <property type="term" value="F:GTPase activity"/>
    <property type="evidence" value="ECO:0007669"/>
    <property type="project" value="InterPro"/>
</dbReference>
<dbReference type="GO" id="GO:0016151">
    <property type="term" value="F:nickel cation binding"/>
    <property type="evidence" value="ECO:0007669"/>
    <property type="project" value="UniProtKB-UniRule"/>
</dbReference>
<dbReference type="GO" id="GO:0043419">
    <property type="term" value="P:urea catabolic process"/>
    <property type="evidence" value="ECO:0007669"/>
    <property type="project" value="InterPro"/>
</dbReference>
<dbReference type="CDD" id="cd05540">
    <property type="entry name" value="UreG"/>
    <property type="match status" value="1"/>
</dbReference>
<dbReference type="FunFam" id="3.40.50.300:FF:000208">
    <property type="entry name" value="Urease accessory protein UreG"/>
    <property type="match status" value="1"/>
</dbReference>
<dbReference type="Gene3D" id="3.40.50.300">
    <property type="entry name" value="P-loop containing nucleotide triphosphate hydrolases"/>
    <property type="match status" value="1"/>
</dbReference>
<dbReference type="HAMAP" id="MF_01389">
    <property type="entry name" value="UreG"/>
    <property type="match status" value="1"/>
</dbReference>
<dbReference type="InterPro" id="IPR003495">
    <property type="entry name" value="CobW/HypB/UreG_nucleotide-bd"/>
</dbReference>
<dbReference type="InterPro" id="IPR027417">
    <property type="entry name" value="P-loop_NTPase"/>
</dbReference>
<dbReference type="InterPro" id="IPR004400">
    <property type="entry name" value="UreG"/>
</dbReference>
<dbReference type="NCBIfam" id="TIGR00101">
    <property type="entry name" value="ureG"/>
    <property type="match status" value="1"/>
</dbReference>
<dbReference type="PANTHER" id="PTHR31715">
    <property type="entry name" value="UREASE ACCESSORY PROTEIN G"/>
    <property type="match status" value="1"/>
</dbReference>
<dbReference type="PANTHER" id="PTHR31715:SF0">
    <property type="entry name" value="UREASE ACCESSORY PROTEIN G"/>
    <property type="match status" value="1"/>
</dbReference>
<dbReference type="Pfam" id="PF02492">
    <property type="entry name" value="cobW"/>
    <property type="match status" value="1"/>
</dbReference>
<dbReference type="PIRSF" id="PIRSF005624">
    <property type="entry name" value="Ni-bind_GTPase"/>
    <property type="match status" value="1"/>
</dbReference>
<dbReference type="SUPFAM" id="SSF52540">
    <property type="entry name" value="P-loop containing nucleoside triphosphate hydrolases"/>
    <property type="match status" value="1"/>
</dbReference>
<proteinExistence type="inferred from homology"/>
<keyword id="KW-0143">Chaperone</keyword>
<keyword id="KW-0963">Cytoplasm</keyword>
<keyword id="KW-0342">GTP-binding</keyword>
<keyword id="KW-0996">Nickel insertion</keyword>
<keyword id="KW-0547">Nucleotide-binding</keyword>
<organism>
    <name type="scientific">Mycobacterium sp. (strain MCS)</name>
    <dbReference type="NCBI Taxonomy" id="164756"/>
    <lineage>
        <taxon>Bacteria</taxon>
        <taxon>Bacillati</taxon>
        <taxon>Actinomycetota</taxon>
        <taxon>Actinomycetes</taxon>
        <taxon>Mycobacteriales</taxon>
        <taxon>Mycobacteriaceae</taxon>
        <taxon>Mycobacterium</taxon>
    </lineage>
</organism>
<protein>
    <recommendedName>
        <fullName evidence="1">Urease accessory protein UreG</fullName>
    </recommendedName>
</protein>
<sequence>MPPHFLSADSTGQPHRHADRPKRVRTPGEPLRIGVGGPVGSGKTALVAALCRQLRDELSLAVLTNDIYTTEDADFLRRHAVLPDDRIAAVQTGGCPHTAIRDDITANLDAIDDLVAGHDHLDLILVESGGDNLTATFSSGLVDVQIFVVDVAGGDKVPRKGGPGVTFSDLLVINKTDLAPMVGADLDVMRRDSTKVRGERPFVLISLTADPTAGPVLDWVRAQLRVPVQG</sequence>
<feature type="chain" id="PRO_1000145192" description="Urease accessory protein UreG">
    <location>
        <begin position="1"/>
        <end position="230"/>
    </location>
</feature>
<feature type="region of interest" description="Disordered" evidence="2">
    <location>
        <begin position="1"/>
        <end position="31"/>
    </location>
</feature>
<feature type="compositionally biased region" description="Basic residues" evidence="2">
    <location>
        <begin position="14"/>
        <end position="25"/>
    </location>
</feature>
<feature type="binding site" evidence="1">
    <location>
        <begin position="37"/>
        <end position="44"/>
    </location>
    <ligand>
        <name>GTP</name>
        <dbReference type="ChEBI" id="CHEBI:37565"/>
    </ligand>
</feature>
<accession>Q1B874</accession>
<gene>
    <name evidence="1" type="primary">ureG</name>
    <name type="ordered locus">Mmcs_2803</name>
</gene>
<evidence type="ECO:0000255" key="1">
    <source>
        <dbReference type="HAMAP-Rule" id="MF_01389"/>
    </source>
</evidence>
<evidence type="ECO:0000256" key="2">
    <source>
        <dbReference type="SAM" id="MobiDB-lite"/>
    </source>
</evidence>